<accession>E5L0E5</accession>
<organism>
    <name type="scientific">Agkistrodon piscivorus leucostoma</name>
    <name type="common">Western cottonmouth</name>
    <name type="synonym">Acontias leucostoma</name>
    <dbReference type="NCBI Taxonomy" id="459671"/>
    <lineage>
        <taxon>Eukaryota</taxon>
        <taxon>Metazoa</taxon>
        <taxon>Chordata</taxon>
        <taxon>Craniata</taxon>
        <taxon>Vertebrata</taxon>
        <taxon>Euteleostomi</taxon>
        <taxon>Lepidosauria</taxon>
        <taxon>Squamata</taxon>
        <taxon>Bifurcata</taxon>
        <taxon>Unidentata</taxon>
        <taxon>Episquamata</taxon>
        <taxon>Toxicofera</taxon>
        <taxon>Serpentes</taxon>
        <taxon>Colubroidea</taxon>
        <taxon>Viperidae</taxon>
        <taxon>Crotalinae</taxon>
        <taxon>Agkistrodon</taxon>
    </lineage>
</organism>
<reference key="1">
    <citation type="journal article" date="2011" name="Toxicon">
        <title>Phylogenetic analysis of serine proteases from Russell's viper (Daboia russelli siamensis) and Agkistrodon piscivorus leucostoma venom.</title>
        <authorList>
            <person name="Sukkapan P."/>
            <person name="Jia Y."/>
            <person name="Nuchprayoon I."/>
            <person name="Perez J.C."/>
        </authorList>
    </citation>
    <scope>NUCLEOTIDE SEQUENCE [MRNA]</scope>
    <source>
        <tissue>Venom gland</tissue>
    </source>
</reference>
<dbReference type="EC" id="3.4.21.-"/>
<dbReference type="EMBL" id="HQ270466">
    <property type="protein sequence ID" value="ADP88561.1"/>
    <property type="molecule type" value="mRNA"/>
</dbReference>
<dbReference type="SMR" id="E5L0E5"/>
<dbReference type="MEROPS" id="S01.023"/>
<dbReference type="GO" id="GO:0005576">
    <property type="term" value="C:extracellular region"/>
    <property type="evidence" value="ECO:0007669"/>
    <property type="project" value="UniProtKB-SubCell"/>
</dbReference>
<dbReference type="GO" id="GO:0030141">
    <property type="term" value="C:secretory granule"/>
    <property type="evidence" value="ECO:0007669"/>
    <property type="project" value="TreeGrafter"/>
</dbReference>
<dbReference type="GO" id="GO:0004252">
    <property type="term" value="F:serine-type endopeptidase activity"/>
    <property type="evidence" value="ECO:0007669"/>
    <property type="project" value="InterPro"/>
</dbReference>
<dbReference type="GO" id="GO:0035821">
    <property type="term" value="P:modulation of process of another organism"/>
    <property type="evidence" value="ECO:0007669"/>
    <property type="project" value="UniProtKB-ARBA"/>
</dbReference>
<dbReference type="GO" id="GO:0006508">
    <property type="term" value="P:proteolysis"/>
    <property type="evidence" value="ECO:0007669"/>
    <property type="project" value="UniProtKB-KW"/>
</dbReference>
<dbReference type="CDD" id="cd00190">
    <property type="entry name" value="Tryp_SPc"/>
    <property type="match status" value="1"/>
</dbReference>
<dbReference type="FunFam" id="2.40.10.10:FF:000158">
    <property type="entry name" value="Thrombin-like enzyme saxthrombin"/>
    <property type="match status" value="1"/>
</dbReference>
<dbReference type="FunFam" id="2.40.10.10:FF:000153">
    <property type="entry name" value="Venom plasminogen activator TSV-PA"/>
    <property type="match status" value="1"/>
</dbReference>
<dbReference type="Gene3D" id="2.40.10.10">
    <property type="entry name" value="Trypsin-like serine proteases"/>
    <property type="match status" value="2"/>
</dbReference>
<dbReference type="InterPro" id="IPR009003">
    <property type="entry name" value="Peptidase_S1_PA"/>
</dbReference>
<dbReference type="InterPro" id="IPR043504">
    <property type="entry name" value="Peptidase_S1_PA_chymotrypsin"/>
</dbReference>
<dbReference type="InterPro" id="IPR001314">
    <property type="entry name" value="Peptidase_S1A"/>
</dbReference>
<dbReference type="InterPro" id="IPR001254">
    <property type="entry name" value="Trypsin_dom"/>
</dbReference>
<dbReference type="InterPro" id="IPR018114">
    <property type="entry name" value="TRYPSIN_HIS"/>
</dbReference>
<dbReference type="InterPro" id="IPR033116">
    <property type="entry name" value="TRYPSIN_SER"/>
</dbReference>
<dbReference type="PANTHER" id="PTHR24271:SF47">
    <property type="entry name" value="KALLIKREIN-1"/>
    <property type="match status" value="1"/>
</dbReference>
<dbReference type="PANTHER" id="PTHR24271">
    <property type="entry name" value="KALLIKREIN-RELATED"/>
    <property type="match status" value="1"/>
</dbReference>
<dbReference type="Pfam" id="PF00089">
    <property type="entry name" value="Trypsin"/>
    <property type="match status" value="1"/>
</dbReference>
<dbReference type="PRINTS" id="PR00722">
    <property type="entry name" value="CHYMOTRYPSIN"/>
</dbReference>
<dbReference type="SMART" id="SM00020">
    <property type="entry name" value="Tryp_SPc"/>
    <property type="match status" value="1"/>
</dbReference>
<dbReference type="SUPFAM" id="SSF50494">
    <property type="entry name" value="Trypsin-like serine proteases"/>
    <property type="match status" value="1"/>
</dbReference>
<dbReference type="PROSITE" id="PS50240">
    <property type="entry name" value="TRYPSIN_DOM"/>
    <property type="match status" value="1"/>
</dbReference>
<dbReference type="PROSITE" id="PS00134">
    <property type="entry name" value="TRYPSIN_HIS"/>
    <property type="match status" value="1"/>
</dbReference>
<dbReference type="PROSITE" id="PS00135">
    <property type="entry name" value="TRYPSIN_SER"/>
    <property type="match status" value="1"/>
</dbReference>
<evidence type="ECO:0000250" key="1"/>
<evidence type="ECO:0000250" key="2">
    <source>
        <dbReference type="UniProtKB" id="Q91516"/>
    </source>
</evidence>
<evidence type="ECO:0000250" key="3">
    <source>
        <dbReference type="UniProtKB" id="Q9YGJ8"/>
    </source>
</evidence>
<evidence type="ECO:0000255" key="4"/>
<evidence type="ECO:0000255" key="5">
    <source>
        <dbReference type="PROSITE-ProRule" id="PRU00274"/>
    </source>
</evidence>
<evidence type="ECO:0000303" key="6">
    <source>
    </source>
</evidence>
<evidence type="ECO:0000305" key="7"/>
<proteinExistence type="evidence at transcript level"/>
<feature type="signal peptide" evidence="4">
    <location>
        <begin position="1"/>
        <end position="18"/>
    </location>
</feature>
<feature type="propeptide" id="PRO_0000432334" evidence="1">
    <location>
        <begin position="19"/>
        <end position="24"/>
    </location>
</feature>
<feature type="chain" id="PRO_0000432335" description="Venom plasminogen activator">
    <location>
        <begin position="25"/>
        <end position="258"/>
    </location>
</feature>
<feature type="domain" description="Peptidase S1" evidence="5">
    <location>
        <begin position="25"/>
        <end position="249"/>
    </location>
</feature>
<feature type="active site" description="Charge relay system" evidence="1">
    <location>
        <position position="65"/>
    </location>
</feature>
<feature type="active site" description="Charge relay system" evidence="1">
    <location>
        <position position="110"/>
    </location>
</feature>
<feature type="active site" description="Charge relay system" evidence="1">
    <location>
        <position position="204"/>
    </location>
</feature>
<feature type="glycosylation site" description="N-linked (GlcNAc...) asparagine" evidence="4">
    <location>
        <position position="44"/>
    </location>
</feature>
<feature type="disulfide bond" evidence="2">
    <location>
        <begin position="31"/>
        <end position="163"/>
    </location>
</feature>
<feature type="disulfide bond" evidence="2">
    <location>
        <begin position="50"/>
        <end position="66"/>
    </location>
</feature>
<feature type="disulfide bond" evidence="2">
    <location>
        <begin position="98"/>
        <end position="256"/>
    </location>
</feature>
<feature type="disulfide bond" evidence="2">
    <location>
        <begin position="142"/>
        <end position="210"/>
    </location>
</feature>
<feature type="disulfide bond" evidence="2">
    <location>
        <begin position="174"/>
        <end position="189"/>
    </location>
</feature>
<feature type="disulfide bond" evidence="2">
    <location>
        <begin position="200"/>
        <end position="225"/>
    </location>
</feature>
<protein>
    <recommendedName>
        <fullName evidence="6">Venom plasminogen activator</fullName>
        <shortName evidence="6">APL-PA</shortName>
        <ecNumber>3.4.21.-</ecNumber>
    </recommendedName>
    <alternativeName>
        <fullName evidence="7">Snake venom serine protease</fullName>
        <shortName evidence="7">SVSP</shortName>
    </alternativeName>
</protein>
<sequence>MVLIRVLANLLILQLSYAQKSSELVVGGDECNINEHRSLVVFFNSSGFLCGGTSINQEWVLTAAHCDSKNFQMLFGVHSKKILNEDEQTRDPKEKFICPNRKKDDERDKDIMLIRLDSPVSNSEHIAPLSLPSSPPSVGSVCRIMGWGTISPTKVTYPDVPHCANINILDHAVCRAAYPTLLAESSTVCAGTQQEGKDTCGGDSGGPLICNGQIQGIVSWRAHPCGQGLKPGVYTKVFDYTDWIQSIISGNTDVTCPP</sequence>
<keyword id="KW-1015">Disulfide bond</keyword>
<keyword id="KW-0325">Glycoprotein</keyword>
<keyword id="KW-0378">Hydrolase</keyword>
<keyword id="KW-0617">Plasminogen activation</keyword>
<keyword id="KW-0645">Protease</keyword>
<keyword id="KW-0964">Secreted</keyword>
<keyword id="KW-0720">Serine protease</keyword>
<keyword id="KW-0732">Signal</keyword>
<keyword id="KW-0865">Zymogen</keyword>
<name>VSPPA_AGKPL</name>
<comment type="function">
    <text evidence="3">Snake venom serine protease that activates plasminogen. Shows a preferential cleavage at Arg-|-Xaa instead of Lys-|-Xaa bonds.</text>
</comment>
<comment type="subunit">
    <text evidence="3">Monomer.</text>
</comment>
<comment type="subcellular location">
    <subcellularLocation>
        <location evidence="3">Secreted</location>
    </subcellularLocation>
</comment>
<comment type="tissue specificity">
    <text evidence="7">Expressed by the venom gland.</text>
</comment>
<comment type="similarity">
    <text evidence="7">Belongs to the peptidase S1 family. Snake venom subfamily.</text>
</comment>